<name>METN1_BURL3</name>
<sequence length="344" mass="37321">MIELRNLSQRFPGPGGWVEALRNINLTIPQGEVFGIIGRSGAGKSTLVRTINLLTRPTEGNVVVGGRDLTMLPAGALREARREIGMIFQHFNLLSSRTVFDNVALPLELAGASRAEIDAAVLPLLDLVGLSAQKDRYPSQISGGQKQRVGIARALASQPKVLLSDEATSALDPETTRSILDLLKRINRELGLTIVLITHQMEVIKQVCDRVAVLDAGRVVEEGRVIDVFLQPHHEVTRALIGDVIAQELPPALKARVAERLKTGRGHLLRLAFTGSGVDQPILSETIRRYELDFNILHGQIDEIQGQAFGSLAVLAGGEPGKVGQALAFLREQGVVVEELSYVE</sequence>
<proteinExistence type="inferred from homology"/>
<keyword id="KW-0029">Amino-acid transport</keyword>
<keyword id="KW-0067">ATP-binding</keyword>
<keyword id="KW-0997">Cell inner membrane</keyword>
<keyword id="KW-1003">Cell membrane</keyword>
<keyword id="KW-0472">Membrane</keyword>
<keyword id="KW-0547">Nucleotide-binding</keyword>
<keyword id="KW-1278">Translocase</keyword>
<keyword id="KW-0813">Transport</keyword>
<protein>
    <recommendedName>
        <fullName evidence="1">Methionine import ATP-binding protein MetN 1</fullName>
        <ecNumber evidence="1">7.4.2.11</ecNumber>
    </recommendedName>
</protein>
<reference key="1">
    <citation type="submission" date="2005-10" db="EMBL/GenBank/DDBJ databases">
        <title>Complete sequence of chromosome 1 of Burkholderia sp. 383.</title>
        <authorList>
            <consortium name="US DOE Joint Genome Institute"/>
            <person name="Copeland A."/>
            <person name="Lucas S."/>
            <person name="Lapidus A."/>
            <person name="Barry K."/>
            <person name="Detter J.C."/>
            <person name="Glavina T."/>
            <person name="Hammon N."/>
            <person name="Israni S."/>
            <person name="Pitluck S."/>
            <person name="Chain P."/>
            <person name="Malfatti S."/>
            <person name="Shin M."/>
            <person name="Vergez L."/>
            <person name="Schmutz J."/>
            <person name="Larimer F."/>
            <person name="Land M."/>
            <person name="Kyrpides N."/>
            <person name="Lykidis A."/>
            <person name="Richardson P."/>
        </authorList>
    </citation>
    <scope>NUCLEOTIDE SEQUENCE [LARGE SCALE GENOMIC DNA]</scope>
    <source>
        <strain>ATCC 17760 / DSM 23089 / LMG 22485 / NCIMB 9086 / R18194 / 383</strain>
    </source>
</reference>
<comment type="function">
    <text evidence="1">Part of the ABC transporter complex MetNIQ involved in methionine import. Responsible for energy coupling to the transport system.</text>
</comment>
<comment type="catalytic activity">
    <reaction evidence="1">
        <text>L-methionine(out) + ATP + H2O = L-methionine(in) + ADP + phosphate + H(+)</text>
        <dbReference type="Rhea" id="RHEA:29779"/>
        <dbReference type="ChEBI" id="CHEBI:15377"/>
        <dbReference type="ChEBI" id="CHEBI:15378"/>
        <dbReference type="ChEBI" id="CHEBI:30616"/>
        <dbReference type="ChEBI" id="CHEBI:43474"/>
        <dbReference type="ChEBI" id="CHEBI:57844"/>
        <dbReference type="ChEBI" id="CHEBI:456216"/>
        <dbReference type="EC" id="7.4.2.11"/>
    </reaction>
</comment>
<comment type="catalytic activity">
    <reaction evidence="1">
        <text>D-methionine(out) + ATP + H2O = D-methionine(in) + ADP + phosphate + H(+)</text>
        <dbReference type="Rhea" id="RHEA:29767"/>
        <dbReference type="ChEBI" id="CHEBI:15377"/>
        <dbReference type="ChEBI" id="CHEBI:15378"/>
        <dbReference type="ChEBI" id="CHEBI:30616"/>
        <dbReference type="ChEBI" id="CHEBI:43474"/>
        <dbReference type="ChEBI" id="CHEBI:57932"/>
        <dbReference type="ChEBI" id="CHEBI:456216"/>
        <dbReference type="EC" id="7.4.2.11"/>
    </reaction>
</comment>
<comment type="subunit">
    <text evidence="1">The complex is composed of two ATP-binding proteins (MetN), two transmembrane proteins (MetI) and a solute-binding protein (MetQ).</text>
</comment>
<comment type="subcellular location">
    <subcellularLocation>
        <location evidence="1">Cell inner membrane</location>
        <topology evidence="1">Peripheral membrane protein</topology>
    </subcellularLocation>
</comment>
<comment type="similarity">
    <text evidence="1">Belongs to the ABC transporter superfamily. Methionine importer (TC 3.A.1.24) family.</text>
</comment>
<evidence type="ECO:0000255" key="1">
    <source>
        <dbReference type="HAMAP-Rule" id="MF_01719"/>
    </source>
</evidence>
<accession>Q39IE7</accession>
<organism>
    <name type="scientific">Burkholderia lata (strain ATCC 17760 / DSM 23089 / LMG 22485 / NCIMB 9086 / R18194 / 383)</name>
    <dbReference type="NCBI Taxonomy" id="482957"/>
    <lineage>
        <taxon>Bacteria</taxon>
        <taxon>Pseudomonadati</taxon>
        <taxon>Pseudomonadota</taxon>
        <taxon>Betaproteobacteria</taxon>
        <taxon>Burkholderiales</taxon>
        <taxon>Burkholderiaceae</taxon>
        <taxon>Burkholderia</taxon>
        <taxon>Burkholderia cepacia complex</taxon>
    </lineage>
</organism>
<feature type="chain" id="PRO_0000270269" description="Methionine import ATP-binding protein MetN 1">
    <location>
        <begin position="1"/>
        <end position="344"/>
    </location>
</feature>
<feature type="domain" description="ABC transporter" evidence="1">
    <location>
        <begin position="2"/>
        <end position="241"/>
    </location>
</feature>
<feature type="binding site" evidence="1">
    <location>
        <begin position="38"/>
        <end position="45"/>
    </location>
    <ligand>
        <name>ATP</name>
        <dbReference type="ChEBI" id="CHEBI:30616"/>
    </ligand>
</feature>
<dbReference type="EC" id="7.4.2.11" evidence="1"/>
<dbReference type="EMBL" id="CP000151">
    <property type="protein sequence ID" value="ABB07769.1"/>
    <property type="molecule type" value="Genomic_DNA"/>
</dbReference>
<dbReference type="RefSeq" id="WP_011351346.1">
    <property type="nucleotide sequence ID" value="NC_007510.1"/>
</dbReference>
<dbReference type="SMR" id="Q39IE7"/>
<dbReference type="GeneID" id="45094071"/>
<dbReference type="KEGG" id="bur:Bcep18194_A4172"/>
<dbReference type="PATRIC" id="fig|482957.22.peg.1059"/>
<dbReference type="HOGENOM" id="CLU_000604_1_3_4"/>
<dbReference type="Proteomes" id="UP000002705">
    <property type="component" value="Chromosome 1"/>
</dbReference>
<dbReference type="GO" id="GO:0005886">
    <property type="term" value="C:plasma membrane"/>
    <property type="evidence" value="ECO:0007669"/>
    <property type="project" value="UniProtKB-SubCell"/>
</dbReference>
<dbReference type="GO" id="GO:0033232">
    <property type="term" value="F:ABC-type D-methionine transporter activity"/>
    <property type="evidence" value="ECO:0007669"/>
    <property type="project" value="UniProtKB-EC"/>
</dbReference>
<dbReference type="GO" id="GO:0005524">
    <property type="term" value="F:ATP binding"/>
    <property type="evidence" value="ECO:0007669"/>
    <property type="project" value="UniProtKB-KW"/>
</dbReference>
<dbReference type="GO" id="GO:0016887">
    <property type="term" value="F:ATP hydrolysis activity"/>
    <property type="evidence" value="ECO:0007669"/>
    <property type="project" value="InterPro"/>
</dbReference>
<dbReference type="CDD" id="cd03258">
    <property type="entry name" value="ABC_MetN_methionine_transporter"/>
    <property type="match status" value="1"/>
</dbReference>
<dbReference type="FunFam" id="3.40.50.300:FF:000056">
    <property type="entry name" value="Cell division ATP-binding protein FtsE"/>
    <property type="match status" value="1"/>
</dbReference>
<dbReference type="Gene3D" id="3.30.70.260">
    <property type="match status" value="1"/>
</dbReference>
<dbReference type="Gene3D" id="3.40.50.300">
    <property type="entry name" value="P-loop containing nucleotide triphosphate hydrolases"/>
    <property type="match status" value="1"/>
</dbReference>
<dbReference type="InterPro" id="IPR003593">
    <property type="entry name" value="AAA+_ATPase"/>
</dbReference>
<dbReference type="InterPro" id="IPR003439">
    <property type="entry name" value="ABC_transporter-like_ATP-bd"/>
</dbReference>
<dbReference type="InterPro" id="IPR017871">
    <property type="entry name" value="ABC_transporter-like_CS"/>
</dbReference>
<dbReference type="InterPro" id="IPR045865">
    <property type="entry name" value="ACT-like_dom_sf"/>
</dbReference>
<dbReference type="InterPro" id="IPR041701">
    <property type="entry name" value="MetN_ABC"/>
</dbReference>
<dbReference type="InterPro" id="IPR050086">
    <property type="entry name" value="MetN_ABC_transporter-like"/>
</dbReference>
<dbReference type="InterPro" id="IPR018449">
    <property type="entry name" value="NIL_domain"/>
</dbReference>
<dbReference type="InterPro" id="IPR027417">
    <property type="entry name" value="P-loop_NTPase"/>
</dbReference>
<dbReference type="PANTHER" id="PTHR43166">
    <property type="entry name" value="AMINO ACID IMPORT ATP-BINDING PROTEIN"/>
    <property type="match status" value="1"/>
</dbReference>
<dbReference type="PANTHER" id="PTHR43166:SF30">
    <property type="entry name" value="METHIONINE IMPORT ATP-BINDING PROTEIN METN"/>
    <property type="match status" value="1"/>
</dbReference>
<dbReference type="Pfam" id="PF00005">
    <property type="entry name" value="ABC_tran"/>
    <property type="match status" value="1"/>
</dbReference>
<dbReference type="Pfam" id="PF09383">
    <property type="entry name" value="NIL"/>
    <property type="match status" value="1"/>
</dbReference>
<dbReference type="SMART" id="SM00382">
    <property type="entry name" value="AAA"/>
    <property type="match status" value="1"/>
</dbReference>
<dbReference type="SMART" id="SM00930">
    <property type="entry name" value="NIL"/>
    <property type="match status" value="1"/>
</dbReference>
<dbReference type="SUPFAM" id="SSF55021">
    <property type="entry name" value="ACT-like"/>
    <property type="match status" value="1"/>
</dbReference>
<dbReference type="SUPFAM" id="SSF52540">
    <property type="entry name" value="P-loop containing nucleoside triphosphate hydrolases"/>
    <property type="match status" value="1"/>
</dbReference>
<dbReference type="PROSITE" id="PS00211">
    <property type="entry name" value="ABC_TRANSPORTER_1"/>
    <property type="match status" value="1"/>
</dbReference>
<dbReference type="PROSITE" id="PS50893">
    <property type="entry name" value="ABC_TRANSPORTER_2"/>
    <property type="match status" value="1"/>
</dbReference>
<dbReference type="PROSITE" id="PS51264">
    <property type="entry name" value="METN"/>
    <property type="match status" value="1"/>
</dbReference>
<gene>
    <name evidence="1" type="primary">metN1</name>
    <name type="ordered locus">Bcep18194_A4172</name>
</gene>